<protein>
    <recommendedName>
        <fullName evidence="1">Adenylosuccinate synthetase</fullName>
        <shortName evidence="1">AMPSase</shortName>
        <shortName evidence="1">AdSS</shortName>
        <ecNumber evidence="1">6.3.4.4</ecNumber>
    </recommendedName>
    <alternativeName>
        <fullName evidence="1">IMP--aspartate ligase</fullName>
    </alternativeName>
</protein>
<dbReference type="EC" id="6.3.4.4" evidence="1"/>
<dbReference type="EMBL" id="CP000143">
    <property type="protein sequence ID" value="ABA79541.1"/>
    <property type="molecule type" value="Genomic_DNA"/>
</dbReference>
<dbReference type="RefSeq" id="WP_011338184.1">
    <property type="nucleotide sequence ID" value="NC_007493.2"/>
</dbReference>
<dbReference type="RefSeq" id="YP_353442.1">
    <property type="nucleotide sequence ID" value="NC_007493.2"/>
</dbReference>
<dbReference type="SMR" id="Q3J0Z3"/>
<dbReference type="STRING" id="272943.RSP_0366"/>
<dbReference type="EnsemblBacteria" id="ABA79541">
    <property type="protein sequence ID" value="ABA79541"/>
    <property type="gene ID" value="RSP_0366"/>
</dbReference>
<dbReference type="GeneID" id="3718990"/>
<dbReference type="KEGG" id="rsp:RSP_0366"/>
<dbReference type="PATRIC" id="fig|272943.9.peg.2311"/>
<dbReference type="eggNOG" id="COG0104">
    <property type="taxonomic scope" value="Bacteria"/>
</dbReference>
<dbReference type="OrthoDB" id="9807553at2"/>
<dbReference type="PhylomeDB" id="Q3J0Z3"/>
<dbReference type="UniPathway" id="UPA00075">
    <property type="reaction ID" value="UER00335"/>
</dbReference>
<dbReference type="Proteomes" id="UP000002703">
    <property type="component" value="Chromosome 1"/>
</dbReference>
<dbReference type="GO" id="GO:0005737">
    <property type="term" value="C:cytoplasm"/>
    <property type="evidence" value="ECO:0007669"/>
    <property type="project" value="UniProtKB-SubCell"/>
</dbReference>
<dbReference type="GO" id="GO:0004019">
    <property type="term" value="F:adenylosuccinate synthase activity"/>
    <property type="evidence" value="ECO:0007669"/>
    <property type="project" value="UniProtKB-UniRule"/>
</dbReference>
<dbReference type="GO" id="GO:0005525">
    <property type="term" value="F:GTP binding"/>
    <property type="evidence" value="ECO:0007669"/>
    <property type="project" value="UniProtKB-UniRule"/>
</dbReference>
<dbReference type="GO" id="GO:0000287">
    <property type="term" value="F:magnesium ion binding"/>
    <property type="evidence" value="ECO:0007669"/>
    <property type="project" value="UniProtKB-UniRule"/>
</dbReference>
<dbReference type="GO" id="GO:0044208">
    <property type="term" value="P:'de novo' AMP biosynthetic process"/>
    <property type="evidence" value="ECO:0007669"/>
    <property type="project" value="UniProtKB-UniRule"/>
</dbReference>
<dbReference type="GO" id="GO:0046040">
    <property type="term" value="P:IMP metabolic process"/>
    <property type="evidence" value="ECO:0007669"/>
    <property type="project" value="TreeGrafter"/>
</dbReference>
<dbReference type="CDD" id="cd03108">
    <property type="entry name" value="AdSS"/>
    <property type="match status" value="1"/>
</dbReference>
<dbReference type="FunFam" id="1.10.300.10:FF:000001">
    <property type="entry name" value="Adenylosuccinate synthetase"/>
    <property type="match status" value="1"/>
</dbReference>
<dbReference type="FunFam" id="3.90.170.10:FF:000001">
    <property type="entry name" value="Adenylosuccinate synthetase"/>
    <property type="match status" value="1"/>
</dbReference>
<dbReference type="Gene3D" id="3.40.440.10">
    <property type="entry name" value="Adenylosuccinate Synthetase, subunit A, domain 1"/>
    <property type="match status" value="1"/>
</dbReference>
<dbReference type="Gene3D" id="1.10.300.10">
    <property type="entry name" value="Adenylosuccinate Synthetase, subunit A, domain 2"/>
    <property type="match status" value="1"/>
</dbReference>
<dbReference type="Gene3D" id="3.90.170.10">
    <property type="entry name" value="Adenylosuccinate Synthetase, subunit A, domain 3"/>
    <property type="match status" value="1"/>
</dbReference>
<dbReference type="HAMAP" id="MF_00011">
    <property type="entry name" value="Adenylosucc_synth"/>
    <property type="match status" value="1"/>
</dbReference>
<dbReference type="InterPro" id="IPR018220">
    <property type="entry name" value="Adenylosuccin_syn_GTP-bd"/>
</dbReference>
<dbReference type="InterPro" id="IPR033128">
    <property type="entry name" value="Adenylosuccin_syn_Lys_AS"/>
</dbReference>
<dbReference type="InterPro" id="IPR042109">
    <property type="entry name" value="Adenylosuccinate_synth_dom1"/>
</dbReference>
<dbReference type="InterPro" id="IPR042110">
    <property type="entry name" value="Adenylosuccinate_synth_dom2"/>
</dbReference>
<dbReference type="InterPro" id="IPR042111">
    <property type="entry name" value="Adenylosuccinate_synth_dom3"/>
</dbReference>
<dbReference type="InterPro" id="IPR001114">
    <property type="entry name" value="Adenylosuccinate_synthetase"/>
</dbReference>
<dbReference type="InterPro" id="IPR027417">
    <property type="entry name" value="P-loop_NTPase"/>
</dbReference>
<dbReference type="NCBIfam" id="NF002223">
    <property type="entry name" value="PRK01117.1"/>
    <property type="match status" value="1"/>
</dbReference>
<dbReference type="NCBIfam" id="TIGR00184">
    <property type="entry name" value="purA"/>
    <property type="match status" value="1"/>
</dbReference>
<dbReference type="PANTHER" id="PTHR11846">
    <property type="entry name" value="ADENYLOSUCCINATE SYNTHETASE"/>
    <property type="match status" value="1"/>
</dbReference>
<dbReference type="PANTHER" id="PTHR11846:SF0">
    <property type="entry name" value="ADENYLOSUCCINATE SYNTHETASE"/>
    <property type="match status" value="1"/>
</dbReference>
<dbReference type="Pfam" id="PF00709">
    <property type="entry name" value="Adenylsucc_synt"/>
    <property type="match status" value="1"/>
</dbReference>
<dbReference type="SMART" id="SM00788">
    <property type="entry name" value="Adenylsucc_synt"/>
    <property type="match status" value="1"/>
</dbReference>
<dbReference type="SUPFAM" id="SSF52540">
    <property type="entry name" value="P-loop containing nucleoside triphosphate hydrolases"/>
    <property type="match status" value="1"/>
</dbReference>
<dbReference type="PROSITE" id="PS01266">
    <property type="entry name" value="ADENYLOSUCCIN_SYN_1"/>
    <property type="match status" value="1"/>
</dbReference>
<dbReference type="PROSITE" id="PS00513">
    <property type="entry name" value="ADENYLOSUCCIN_SYN_2"/>
    <property type="match status" value="1"/>
</dbReference>
<feature type="chain" id="PRO_0000224314" description="Adenylosuccinate synthetase">
    <location>
        <begin position="1"/>
        <end position="430"/>
    </location>
</feature>
<feature type="active site" description="Proton acceptor" evidence="1">
    <location>
        <position position="13"/>
    </location>
</feature>
<feature type="active site" description="Proton donor" evidence="1">
    <location>
        <position position="41"/>
    </location>
</feature>
<feature type="binding site" evidence="1">
    <location>
        <begin position="12"/>
        <end position="18"/>
    </location>
    <ligand>
        <name>GTP</name>
        <dbReference type="ChEBI" id="CHEBI:37565"/>
    </ligand>
</feature>
<feature type="binding site" description="in other chain" evidence="1">
    <location>
        <begin position="13"/>
        <end position="16"/>
    </location>
    <ligand>
        <name>IMP</name>
        <dbReference type="ChEBI" id="CHEBI:58053"/>
        <note>ligand shared between dimeric partners</note>
    </ligand>
</feature>
<feature type="binding site" evidence="1">
    <location>
        <position position="13"/>
    </location>
    <ligand>
        <name>Mg(2+)</name>
        <dbReference type="ChEBI" id="CHEBI:18420"/>
    </ligand>
</feature>
<feature type="binding site" description="in other chain" evidence="1">
    <location>
        <begin position="38"/>
        <end position="41"/>
    </location>
    <ligand>
        <name>IMP</name>
        <dbReference type="ChEBI" id="CHEBI:58053"/>
        <note>ligand shared between dimeric partners</note>
    </ligand>
</feature>
<feature type="binding site" evidence="1">
    <location>
        <begin position="40"/>
        <end position="42"/>
    </location>
    <ligand>
        <name>GTP</name>
        <dbReference type="ChEBI" id="CHEBI:37565"/>
    </ligand>
</feature>
<feature type="binding site" evidence="1">
    <location>
        <position position="40"/>
    </location>
    <ligand>
        <name>Mg(2+)</name>
        <dbReference type="ChEBI" id="CHEBI:18420"/>
    </ligand>
</feature>
<feature type="binding site" description="in other chain" evidence="1">
    <location>
        <position position="130"/>
    </location>
    <ligand>
        <name>IMP</name>
        <dbReference type="ChEBI" id="CHEBI:58053"/>
        <note>ligand shared between dimeric partners</note>
    </ligand>
</feature>
<feature type="binding site" evidence="1">
    <location>
        <position position="144"/>
    </location>
    <ligand>
        <name>IMP</name>
        <dbReference type="ChEBI" id="CHEBI:58053"/>
        <note>ligand shared between dimeric partners</note>
    </ligand>
</feature>
<feature type="binding site" description="in other chain" evidence="1">
    <location>
        <position position="224"/>
    </location>
    <ligand>
        <name>IMP</name>
        <dbReference type="ChEBI" id="CHEBI:58053"/>
        <note>ligand shared between dimeric partners</note>
    </ligand>
</feature>
<feature type="binding site" description="in other chain" evidence="1">
    <location>
        <position position="239"/>
    </location>
    <ligand>
        <name>IMP</name>
        <dbReference type="ChEBI" id="CHEBI:58053"/>
        <note>ligand shared between dimeric partners</note>
    </ligand>
</feature>
<feature type="binding site" evidence="1">
    <location>
        <begin position="299"/>
        <end position="305"/>
    </location>
    <ligand>
        <name>substrate</name>
    </ligand>
</feature>
<feature type="binding site" description="in other chain" evidence="1">
    <location>
        <position position="303"/>
    </location>
    <ligand>
        <name>IMP</name>
        <dbReference type="ChEBI" id="CHEBI:58053"/>
        <note>ligand shared between dimeric partners</note>
    </ligand>
</feature>
<feature type="binding site" evidence="1">
    <location>
        <position position="305"/>
    </location>
    <ligand>
        <name>GTP</name>
        <dbReference type="ChEBI" id="CHEBI:37565"/>
    </ligand>
</feature>
<feature type="binding site" evidence="1">
    <location>
        <begin position="331"/>
        <end position="333"/>
    </location>
    <ligand>
        <name>GTP</name>
        <dbReference type="ChEBI" id="CHEBI:37565"/>
    </ligand>
</feature>
<feature type="binding site" evidence="1">
    <location>
        <begin position="413"/>
        <end position="415"/>
    </location>
    <ligand>
        <name>GTP</name>
        <dbReference type="ChEBI" id="CHEBI:37565"/>
    </ligand>
</feature>
<sequence length="430" mass="46408">MANVVVVGAQWGDEGKGKIVDWLSERADVIARFQGGHNAGHTLVIDGKVYKLSLLPSGIVRPGKLSVIGNGVVLDPWHLVQEIAKLRADGVEISPQSLMIAENAVLILPLHGELDRARESQNSVAKIGTTGRGIGPAYEDKVGRRAIRVADLADEATLALRVDRLMVHHDALRRGLGIEPVDREALLAQLREIAPQVLPYAKPVWKVMNEMRKAGKRILFEGAQGALLDIDFGTYPYVTSSNVIAGQAATGTGIGPGAIGFVLGIVKAYTTRVGEGPFPAELQDADGERLGERGREFGTVTGRKRRCGWFDAVLVRQTCATSGVSGIALTKLDVLDGFETLKICVGYELDGERLDHLPIAADQQARCTPIFEELEGWSESTAGARSWADLPGAAVKYVRRIEELIQCPVALLSTSPERDDTILVTDPFED</sequence>
<accession>Q3J0Z3</accession>
<proteinExistence type="inferred from homology"/>
<reference key="1">
    <citation type="submission" date="2005-09" db="EMBL/GenBank/DDBJ databases">
        <title>Complete sequence of chromosome 1 of Rhodobacter sphaeroides 2.4.1.</title>
        <authorList>
            <person name="Copeland A."/>
            <person name="Lucas S."/>
            <person name="Lapidus A."/>
            <person name="Barry K."/>
            <person name="Detter J.C."/>
            <person name="Glavina T."/>
            <person name="Hammon N."/>
            <person name="Israni S."/>
            <person name="Pitluck S."/>
            <person name="Richardson P."/>
            <person name="Mackenzie C."/>
            <person name="Choudhary M."/>
            <person name="Larimer F."/>
            <person name="Hauser L.J."/>
            <person name="Land M."/>
            <person name="Donohue T.J."/>
            <person name="Kaplan S."/>
        </authorList>
    </citation>
    <scope>NUCLEOTIDE SEQUENCE [LARGE SCALE GENOMIC DNA]</scope>
    <source>
        <strain>ATCC 17023 / DSM 158 / JCM 6121 / CCUG 31486 / LMG 2827 / NBRC 12203 / NCIMB 8253 / ATH 2.4.1.</strain>
    </source>
</reference>
<evidence type="ECO:0000255" key="1">
    <source>
        <dbReference type="HAMAP-Rule" id="MF_00011"/>
    </source>
</evidence>
<name>PURA_CERS4</name>
<organism>
    <name type="scientific">Cereibacter sphaeroides (strain ATCC 17023 / DSM 158 / JCM 6121 / CCUG 31486 / LMG 2827 / NBRC 12203 / NCIMB 8253 / ATH 2.4.1.)</name>
    <name type="common">Rhodobacter sphaeroides</name>
    <dbReference type="NCBI Taxonomy" id="272943"/>
    <lineage>
        <taxon>Bacteria</taxon>
        <taxon>Pseudomonadati</taxon>
        <taxon>Pseudomonadota</taxon>
        <taxon>Alphaproteobacteria</taxon>
        <taxon>Rhodobacterales</taxon>
        <taxon>Paracoccaceae</taxon>
        <taxon>Cereibacter</taxon>
    </lineage>
</organism>
<gene>
    <name evidence="1" type="primary">purA</name>
    <name type="ordered locus">RHOS4_19730</name>
    <name type="ORF">RSP_0366</name>
</gene>
<keyword id="KW-0963">Cytoplasm</keyword>
<keyword id="KW-0342">GTP-binding</keyword>
<keyword id="KW-0436">Ligase</keyword>
<keyword id="KW-0460">Magnesium</keyword>
<keyword id="KW-0479">Metal-binding</keyword>
<keyword id="KW-0547">Nucleotide-binding</keyword>
<keyword id="KW-0658">Purine biosynthesis</keyword>
<keyword id="KW-1185">Reference proteome</keyword>
<comment type="function">
    <text evidence="1">Plays an important role in the de novo pathway of purine nucleotide biosynthesis. Catalyzes the first committed step in the biosynthesis of AMP from IMP.</text>
</comment>
<comment type="catalytic activity">
    <reaction evidence="1">
        <text>IMP + L-aspartate + GTP = N(6)-(1,2-dicarboxyethyl)-AMP + GDP + phosphate + 2 H(+)</text>
        <dbReference type="Rhea" id="RHEA:15753"/>
        <dbReference type="ChEBI" id="CHEBI:15378"/>
        <dbReference type="ChEBI" id="CHEBI:29991"/>
        <dbReference type="ChEBI" id="CHEBI:37565"/>
        <dbReference type="ChEBI" id="CHEBI:43474"/>
        <dbReference type="ChEBI" id="CHEBI:57567"/>
        <dbReference type="ChEBI" id="CHEBI:58053"/>
        <dbReference type="ChEBI" id="CHEBI:58189"/>
        <dbReference type="EC" id="6.3.4.4"/>
    </reaction>
</comment>
<comment type="cofactor">
    <cofactor evidence="1">
        <name>Mg(2+)</name>
        <dbReference type="ChEBI" id="CHEBI:18420"/>
    </cofactor>
    <text evidence="1">Binds 1 Mg(2+) ion per subunit.</text>
</comment>
<comment type="pathway">
    <text evidence="1">Purine metabolism; AMP biosynthesis via de novo pathway; AMP from IMP: step 1/2.</text>
</comment>
<comment type="subunit">
    <text evidence="1">Homodimer.</text>
</comment>
<comment type="subcellular location">
    <subcellularLocation>
        <location evidence="1">Cytoplasm</location>
    </subcellularLocation>
</comment>
<comment type="similarity">
    <text evidence="1">Belongs to the adenylosuccinate synthetase family.</text>
</comment>